<proteinExistence type="inferred from homology"/>
<sequence>MKTTTMSQLRQWKQEKRKFATLTAYDASFAQLFAEQGIQVLLVGDSLGMTLQGFDSTLPVTVADMAYHTRAVRRGAPHCLLLADMPFMSYATPELAFTHAAELMRAGANMVKLEGGSWLCDTIRMLAERAVPVCGHLGLTPQSVNIFGGYKVQGREEVAANQLLQDAIALEQAGAQLLVLECVPVELAQRVTEELTIPVIGIGAGNVTDGQILVMHDALGITGGHTPKFSKNFLAHSAGDIRAAIKLYIEEVEGGIYPAEEHTFQ</sequence>
<keyword id="KW-0963">Cytoplasm</keyword>
<keyword id="KW-0460">Magnesium</keyword>
<keyword id="KW-0479">Metal-binding</keyword>
<keyword id="KW-0566">Pantothenate biosynthesis</keyword>
<keyword id="KW-1185">Reference proteome</keyword>
<keyword id="KW-0808">Transferase</keyword>
<evidence type="ECO:0000255" key="1">
    <source>
        <dbReference type="HAMAP-Rule" id="MF_00156"/>
    </source>
</evidence>
<evidence type="ECO:0000305" key="2"/>
<reference key="1">
    <citation type="journal article" date="2001" name="Nature">
        <title>Genome sequence of Yersinia pestis, the causative agent of plague.</title>
        <authorList>
            <person name="Parkhill J."/>
            <person name="Wren B.W."/>
            <person name="Thomson N.R."/>
            <person name="Titball R.W."/>
            <person name="Holden M.T.G."/>
            <person name="Prentice M.B."/>
            <person name="Sebaihia M."/>
            <person name="James K.D."/>
            <person name="Churcher C.M."/>
            <person name="Mungall K.L."/>
            <person name="Baker S."/>
            <person name="Basham D."/>
            <person name="Bentley S.D."/>
            <person name="Brooks K."/>
            <person name="Cerdeno-Tarraga A.-M."/>
            <person name="Chillingworth T."/>
            <person name="Cronin A."/>
            <person name="Davies R.M."/>
            <person name="Davis P."/>
            <person name="Dougan G."/>
            <person name="Feltwell T."/>
            <person name="Hamlin N."/>
            <person name="Holroyd S."/>
            <person name="Jagels K."/>
            <person name="Karlyshev A.V."/>
            <person name="Leather S."/>
            <person name="Moule S."/>
            <person name="Oyston P.C.F."/>
            <person name="Quail M.A."/>
            <person name="Rutherford K.M."/>
            <person name="Simmonds M."/>
            <person name="Skelton J."/>
            <person name="Stevens K."/>
            <person name="Whitehead S."/>
            <person name="Barrell B.G."/>
        </authorList>
    </citation>
    <scope>NUCLEOTIDE SEQUENCE [LARGE SCALE GENOMIC DNA]</scope>
    <source>
        <strain>CO-92 / Biovar Orientalis</strain>
    </source>
</reference>
<reference key="2">
    <citation type="journal article" date="2002" name="J. Bacteriol.">
        <title>Genome sequence of Yersinia pestis KIM.</title>
        <authorList>
            <person name="Deng W."/>
            <person name="Burland V."/>
            <person name="Plunkett G. III"/>
            <person name="Boutin A."/>
            <person name="Mayhew G.F."/>
            <person name="Liss P."/>
            <person name="Perna N.T."/>
            <person name="Rose D.J."/>
            <person name="Mau B."/>
            <person name="Zhou S."/>
            <person name="Schwartz D.C."/>
            <person name="Fetherston J.D."/>
            <person name="Lindler L.E."/>
            <person name="Brubaker R.R."/>
            <person name="Plano G.V."/>
            <person name="Straley S.C."/>
            <person name="McDonough K.A."/>
            <person name="Nilles M.L."/>
            <person name="Matson J.S."/>
            <person name="Blattner F.R."/>
            <person name="Perry R.D."/>
        </authorList>
    </citation>
    <scope>NUCLEOTIDE SEQUENCE [LARGE SCALE GENOMIC DNA]</scope>
    <source>
        <strain>KIM10+ / Biovar Mediaevalis</strain>
    </source>
</reference>
<reference key="3">
    <citation type="journal article" date="2004" name="DNA Res.">
        <title>Complete genome sequence of Yersinia pestis strain 91001, an isolate avirulent to humans.</title>
        <authorList>
            <person name="Song Y."/>
            <person name="Tong Z."/>
            <person name="Wang J."/>
            <person name="Wang L."/>
            <person name="Guo Z."/>
            <person name="Han Y."/>
            <person name="Zhang J."/>
            <person name="Pei D."/>
            <person name="Zhou D."/>
            <person name="Qin H."/>
            <person name="Pang X."/>
            <person name="Han Y."/>
            <person name="Zhai J."/>
            <person name="Li M."/>
            <person name="Cui B."/>
            <person name="Qi Z."/>
            <person name="Jin L."/>
            <person name="Dai R."/>
            <person name="Chen F."/>
            <person name="Li S."/>
            <person name="Ye C."/>
            <person name="Du Z."/>
            <person name="Lin W."/>
            <person name="Wang J."/>
            <person name="Yu J."/>
            <person name="Yang H."/>
            <person name="Wang J."/>
            <person name="Huang P."/>
            <person name="Yang R."/>
        </authorList>
    </citation>
    <scope>NUCLEOTIDE SEQUENCE [LARGE SCALE GENOMIC DNA]</scope>
    <source>
        <strain>91001 / Biovar Mediaevalis</strain>
    </source>
</reference>
<gene>
    <name evidence="1" type="primary">panB</name>
    <name type="ordered locus">YPO3401</name>
    <name type="ordered locus">y0786</name>
    <name type="ordered locus">YP_0284</name>
</gene>
<accession>Q8ZBK8</accession>
<accession>Q0WBP5</accession>
<protein>
    <recommendedName>
        <fullName evidence="1">3-methyl-2-oxobutanoate hydroxymethyltransferase</fullName>
        <ecNumber evidence="1">2.1.2.11</ecNumber>
    </recommendedName>
    <alternativeName>
        <fullName evidence="1">Ketopantoate hydroxymethyltransferase</fullName>
        <shortName evidence="1">KPHMT</shortName>
    </alternativeName>
</protein>
<comment type="function">
    <text evidence="1">Catalyzes the reversible reaction in which hydroxymethyl group from 5,10-methylenetetrahydrofolate is transferred onto alpha-ketoisovalerate to form ketopantoate.</text>
</comment>
<comment type="catalytic activity">
    <reaction evidence="1">
        <text>3-methyl-2-oxobutanoate + (6R)-5,10-methylene-5,6,7,8-tetrahydrofolate + H2O = 2-dehydropantoate + (6S)-5,6,7,8-tetrahydrofolate</text>
        <dbReference type="Rhea" id="RHEA:11824"/>
        <dbReference type="ChEBI" id="CHEBI:11561"/>
        <dbReference type="ChEBI" id="CHEBI:11851"/>
        <dbReference type="ChEBI" id="CHEBI:15377"/>
        <dbReference type="ChEBI" id="CHEBI:15636"/>
        <dbReference type="ChEBI" id="CHEBI:57453"/>
        <dbReference type="EC" id="2.1.2.11"/>
    </reaction>
</comment>
<comment type="cofactor">
    <cofactor evidence="1">
        <name>Mg(2+)</name>
        <dbReference type="ChEBI" id="CHEBI:18420"/>
    </cofactor>
    <text evidence="1">Binds 1 Mg(2+) ion per subunit.</text>
</comment>
<comment type="pathway">
    <text evidence="1">Cofactor biosynthesis; (R)-pantothenate biosynthesis; (R)-pantoate from 3-methyl-2-oxobutanoate: step 1/2.</text>
</comment>
<comment type="subunit">
    <text evidence="1">Homodecamer; pentamer of dimers.</text>
</comment>
<comment type="subcellular location">
    <subcellularLocation>
        <location evidence="1">Cytoplasm</location>
    </subcellularLocation>
</comment>
<comment type="similarity">
    <text evidence="1">Belongs to the PanB family.</text>
</comment>
<comment type="sequence caution" evidence="2">
    <conflict type="erroneous initiation">
        <sequence resource="EMBL-CDS" id="AAM84373"/>
    </conflict>
</comment>
<comment type="sequence caution" evidence="2">
    <conflict type="erroneous initiation">
        <sequence resource="EMBL-CDS" id="CAL21990"/>
    </conflict>
</comment>
<dbReference type="EC" id="2.1.2.11" evidence="1"/>
<dbReference type="EMBL" id="AL590842">
    <property type="protein sequence ID" value="CAL21990.1"/>
    <property type="status" value="ALT_INIT"/>
    <property type="molecule type" value="Genomic_DNA"/>
</dbReference>
<dbReference type="EMBL" id="AE009952">
    <property type="protein sequence ID" value="AAM84373.1"/>
    <property type="status" value="ALT_INIT"/>
    <property type="molecule type" value="Genomic_DNA"/>
</dbReference>
<dbReference type="EMBL" id="AE017042">
    <property type="protein sequence ID" value="AAS60559.1"/>
    <property type="molecule type" value="Genomic_DNA"/>
</dbReference>
<dbReference type="PIR" id="AC0413">
    <property type="entry name" value="AC0413"/>
</dbReference>
<dbReference type="RefSeq" id="WP_002209349.1">
    <property type="nucleotide sequence ID" value="NZ_WUCM01000008.1"/>
</dbReference>
<dbReference type="RefSeq" id="YP_002348293.1">
    <property type="nucleotide sequence ID" value="NC_003143.1"/>
</dbReference>
<dbReference type="SMR" id="Q8ZBK8"/>
<dbReference type="STRING" id="214092.YPO3401"/>
<dbReference type="PaxDb" id="214092-YPO3401"/>
<dbReference type="EnsemblBacteria" id="AAS60559">
    <property type="protein sequence ID" value="AAS60559"/>
    <property type="gene ID" value="YP_0284"/>
</dbReference>
<dbReference type="GeneID" id="57975308"/>
<dbReference type="KEGG" id="ype:YPO3401"/>
<dbReference type="KEGG" id="ypk:y0786"/>
<dbReference type="KEGG" id="ypm:YP_0284"/>
<dbReference type="PATRIC" id="fig|214092.21.peg.3886"/>
<dbReference type="eggNOG" id="COG0413">
    <property type="taxonomic scope" value="Bacteria"/>
</dbReference>
<dbReference type="HOGENOM" id="CLU_036645_1_0_6"/>
<dbReference type="OMA" id="VLVWTDM"/>
<dbReference type="OrthoDB" id="9781789at2"/>
<dbReference type="UniPathway" id="UPA00028">
    <property type="reaction ID" value="UER00003"/>
</dbReference>
<dbReference type="Proteomes" id="UP000000815">
    <property type="component" value="Chromosome"/>
</dbReference>
<dbReference type="Proteomes" id="UP000001019">
    <property type="component" value="Chromosome"/>
</dbReference>
<dbReference type="Proteomes" id="UP000002490">
    <property type="component" value="Chromosome"/>
</dbReference>
<dbReference type="GO" id="GO:0005737">
    <property type="term" value="C:cytoplasm"/>
    <property type="evidence" value="ECO:0000318"/>
    <property type="project" value="GO_Central"/>
</dbReference>
<dbReference type="GO" id="GO:0003864">
    <property type="term" value="F:3-methyl-2-oxobutanoate hydroxymethyltransferase activity"/>
    <property type="evidence" value="ECO:0000318"/>
    <property type="project" value="GO_Central"/>
</dbReference>
<dbReference type="GO" id="GO:0000287">
    <property type="term" value="F:magnesium ion binding"/>
    <property type="evidence" value="ECO:0000318"/>
    <property type="project" value="GO_Central"/>
</dbReference>
<dbReference type="GO" id="GO:0015940">
    <property type="term" value="P:pantothenate biosynthetic process"/>
    <property type="evidence" value="ECO:0000318"/>
    <property type="project" value="GO_Central"/>
</dbReference>
<dbReference type="CDD" id="cd06557">
    <property type="entry name" value="KPHMT-like"/>
    <property type="match status" value="1"/>
</dbReference>
<dbReference type="FunFam" id="3.20.20.60:FF:000003">
    <property type="entry name" value="3-methyl-2-oxobutanoate hydroxymethyltransferase"/>
    <property type="match status" value="1"/>
</dbReference>
<dbReference type="Gene3D" id="3.20.20.60">
    <property type="entry name" value="Phosphoenolpyruvate-binding domains"/>
    <property type="match status" value="1"/>
</dbReference>
<dbReference type="HAMAP" id="MF_00156">
    <property type="entry name" value="PanB"/>
    <property type="match status" value="1"/>
</dbReference>
<dbReference type="InterPro" id="IPR003700">
    <property type="entry name" value="Pantoate_hydroxy_MeTrfase"/>
</dbReference>
<dbReference type="InterPro" id="IPR015813">
    <property type="entry name" value="Pyrv/PenolPyrv_kinase-like_dom"/>
</dbReference>
<dbReference type="InterPro" id="IPR040442">
    <property type="entry name" value="Pyrv_kinase-like_dom_sf"/>
</dbReference>
<dbReference type="NCBIfam" id="TIGR00222">
    <property type="entry name" value="panB"/>
    <property type="match status" value="1"/>
</dbReference>
<dbReference type="NCBIfam" id="NF001452">
    <property type="entry name" value="PRK00311.1"/>
    <property type="match status" value="1"/>
</dbReference>
<dbReference type="PANTHER" id="PTHR20881">
    <property type="entry name" value="3-METHYL-2-OXOBUTANOATE HYDROXYMETHYLTRANSFERASE"/>
    <property type="match status" value="1"/>
</dbReference>
<dbReference type="PANTHER" id="PTHR20881:SF0">
    <property type="entry name" value="3-METHYL-2-OXOBUTANOATE HYDROXYMETHYLTRANSFERASE"/>
    <property type="match status" value="1"/>
</dbReference>
<dbReference type="Pfam" id="PF02548">
    <property type="entry name" value="Pantoate_transf"/>
    <property type="match status" value="1"/>
</dbReference>
<dbReference type="PIRSF" id="PIRSF000388">
    <property type="entry name" value="Pantoate_hydroxy_MeTrfase"/>
    <property type="match status" value="1"/>
</dbReference>
<dbReference type="SUPFAM" id="SSF51621">
    <property type="entry name" value="Phosphoenolpyruvate/pyruvate domain"/>
    <property type="match status" value="1"/>
</dbReference>
<organism>
    <name type="scientific">Yersinia pestis</name>
    <dbReference type="NCBI Taxonomy" id="632"/>
    <lineage>
        <taxon>Bacteria</taxon>
        <taxon>Pseudomonadati</taxon>
        <taxon>Pseudomonadota</taxon>
        <taxon>Gammaproteobacteria</taxon>
        <taxon>Enterobacterales</taxon>
        <taxon>Yersiniaceae</taxon>
        <taxon>Yersinia</taxon>
    </lineage>
</organism>
<name>PANB_YERPE</name>
<feature type="chain" id="PRO_0000184913" description="3-methyl-2-oxobutanoate hydroxymethyltransferase">
    <location>
        <begin position="1"/>
        <end position="265"/>
    </location>
</feature>
<feature type="active site" description="Proton acceptor" evidence="1">
    <location>
        <position position="181"/>
    </location>
</feature>
<feature type="binding site" evidence="1">
    <location>
        <begin position="45"/>
        <end position="46"/>
    </location>
    <ligand>
        <name>3-methyl-2-oxobutanoate</name>
        <dbReference type="ChEBI" id="CHEBI:11851"/>
    </ligand>
</feature>
<feature type="binding site" evidence="1">
    <location>
        <position position="45"/>
    </location>
    <ligand>
        <name>Mg(2+)</name>
        <dbReference type="ChEBI" id="CHEBI:18420"/>
    </ligand>
</feature>
<feature type="binding site" evidence="1">
    <location>
        <position position="84"/>
    </location>
    <ligand>
        <name>3-methyl-2-oxobutanoate</name>
        <dbReference type="ChEBI" id="CHEBI:11851"/>
    </ligand>
</feature>
<feature type="binding site" evidence="1">
    <location>
        <position position="84"/>
    </location>
    <ligand>
        <name>Mg(2+)</name>
        <dbReference type="ChEBI" id="CHEBI:18420"/>
    </ligand>
</feature>
<feature type="binding site" evidence="1">
    <location>
        <position position="112"/>
    </location>
    <ligand>
        <name>3-methyl-2-oxobutanoate</name>
        <dbReference type="ChEBI" id="CHEBI:11851"/>
    </ligand>
</feature>
<feature type="binding site" evidence="1">
    <location>
        <position position="114"/>
    </location>
    <ligand>
        <name>Mg(2+)</name>
        <dbReference type="ChEBI" id="CHEBI:18420"/>
    </ligand>
</feature>